<name>NNRD_PHYPA</name>
<organism>
    <name type="scientific">Physcomitrium patens</name>
    <name type="common">Spreading-leaved earth moss</name>
    <name type="synonym">Physcomitrella patens</name>
    <dbReference type="NCBI Taxonomy" id="3218"/>
    <lineage>
        <taxon>Eukaryota</taxon>
        <taxon>Viridiplantae</taxon>
        <taxon>Streptophyta</taxon>
        <taxon>Embryophyta</taxon>
        <taxon>Bryophyta</taxon>
        <taxon>Bryophytina</taxon>
        <taxon>Bryopsida</taxon>
        <taxon>Funariidae</taxon>
        <taxon>Funariales</taxon>
        <taxon>Funariaceae</taxon>
        <taxon>Physcomitrium</taxon>
    </lineage>
</organism>
<proteinExistence type="inferred from homology"/>
<feature type="chain" id="PRO_0000416174" description="ATP-dependent (S)-NAD(P)H-hydrate dehydratase">
    <location>
        <begin position="1"/>
        <end position="342"/>
    </location>
</feature>
<feature type="domain" description="YjeF C-terminal" evidence="1">
    <location>
        <begin position="11"/>
        <end position="337"/>
    </location>
</feature>
<feature type="binding site" evidence="1">
    <location>
        <position position="127"/>
    </location>
    <ligand>
        <name>(6S)-NADPHX</name>
        <dbReference type="ChEBI" id="CHEBI:64076"/>
    </ligand>
</feature>
<feature type="binding site" evidence="1">
    <location>
        <begin position="180"/>
        <end position="186"/>
    </location>
    <ligand>
        <name>(6S)-NADPHX</name>
        <dbReference type="ChEBI" id="CHEBI:64076"/>
    </ligand>
</feature>
<feature type="binding site" evidence="1">
    <location>
        <begin position="229"/>
        <end position="233"/>
    </location>
    <ligand>
        <name>ATP</name>
        <dbReference type="ChEBI" id="CHEBI:30616"/>
    </ligand>
</feature>
<feature type="binding site" evidence="1">
    <location>
        <begin position="248"/>
        <end position="257"/>
    </location>
    <ligand>
        <name>ATP</name>
        <dbReference type="ChEBI" id="CHEBI:30616"/>
    </ligand>
</feature>
<feature type="binding site" evidence="1">
    <location>
        <position position="258"/>
    </location>
    <ligand>
        <name>(6S)-NADPHX</name>
        <dbReference type="ChEBI" id="CHEBI:64076"/>
    </ligand>
</feature>
<sequence length="342" mass="37003">MGGNSTELQKILPALEKVVPVLAPGRHKGQAGKIAVIGGCREYTGAPYFAAISALKMGADLAHVFCTSGAATVIKSYSPELIVHPVLHESYDVGEIGEEEISGLKDKVLAEVGKWLQRFDCIVIGPGLGRDPILLDCVAAIIEEAKFKNIPLVLDGDGLFLVTNQPELIIGYPLAILTPNVMEHKRLVAKIVGERDQNVPQNPEVSNEDLPGQLQDLAKRMEGVTILQKGKTDYISDGKTVLSSDYYGSPRRCGGQGDVLSGSTAVFVSWAKEYFSNENAAGKKEVEERVSNNPTMVGALAGSLLCRKSAANAFAQHKRATTTTNIIEYLGHRLFTFMLRFY</sequence>
<protein>
    <recommendedName>
        <fullName evidence="1">ATP-dependent (S)-NAD(P)H-hydrate dehydratase</fullName>
        <ecNumber evidence="1">4.2.1.93</ecNumber>
    </recommendedName>
    <alternativeName>
        <fullName evidence="1">ATP-dependent NAD(P)HX dehydratase</fullName>
    </alternativeName>
</protein>
<gene>
    <name type="ORF">PHYPADRAFT_121160</name>
</gene>
<keyword id="KW-0067">ATP-binding</keyword>
<keyword id="KW-0456">Lyase</keyword>
<keyword id="KW-0520">NAD</keyword>
<keyword id="KW-0521">NADP</keyword>
<keyword id="KW-0547">Nucleotide-binding</keyword>
<keyword id="KW-0597">Phosphoprotein</keyword>
<keyword id="KW-1185">Reference proteome</keyword>
<comment type="function">
    <text evidence="1">Catalyzes the dehydration of the S-form of NAD(P)HX at the expense of ATP, which is converted to ADP. Together with NAD(P)HX epimerase, which catalyzes the epimerization of the S- and R-forms, the enzyme allows the repair of both epimers of NAD(P)HX, a damaged form of NAD(P)H that is a result of enzymatic or heat-dependent hydration.</text>
</comment>
<comment type="catalytic activity">
    <reaction evidence="1">
        <text>(6S)-NADHX + ATP = ADP + phosphate + NADH + H(+)</text>
        <dbReference type="Rhea" id="RHEA:19017"/>
        <dbReference type="ChEBI" id="CHEBI:15378"/>
        <dbReference type="ChEBI" id="CHEBI:30616"/>
        <dbReference type="ChEBI" id="CHEBI:43474"/>
        <dbReference type="ChEBI" id="CHEBI:57945"/>
        <dbReference type="ChEBI" id="CHEBI:64074"/>
        <dbReference type="ChEBI" id="CHEBI:456216"/>
        <dbReference type="EC" id="4.2.1.93"/>
    </reaction>
</comment>
<comment type="catalytic activity">
    <reaction>
        <text>(6S)-NADPHX + ATP = ADP + phosphate + NADPH + H(+)</text>
        <dbReference type="Rhea" id="RHEA:32231"/>
        <dbReference type="ChEBI" id="CHEBI:15378"/>
        <dbReference type="ChEBI" id="CHEBI:30616"/>
        <dbReference type="ChEBI" id="CHEBI:43474"/>
        <dbReference type="ChEBI" id="CHEBI:57783"/>
        <dbReference type="ChEBI" id="CHEBI:64076"/>
        <dbReference type="ChEBI" id="CHEBI:456216"/>
        <dbReference type="EC" id="4.2.1.93"/>
    </reaction>
</comment>
<comment type="cofactor">
    <cofactor evidence="1">
        <name>Mg(2+)</name>
        <dbReference type="ChEBI" id="CHEBI:18420"/>
    </cofactor>
</comment>
<comment type="similarity">
    <text evidence="1">Belongs to the NnrD/CARKD family.</text>
</comment>
<accession>A9RY03</accession>
<reference key="1">
    <citation type="journal article" date="2008" name="Science">
        <title>The Physcomitrella genome reveals evolutionary insights into the conquest of land by plants.</title>
        <authorList>
            <person name="Rensing S.A."/>
            <person name="Lang D."/>
            <person name="Zimmer A.D."/>
            <person name="Terry A."/>
            <person name="Salamov A."/>
            <person name="Shapiro H."/>
            <person name="Nishiyama T."/>
            <person name="Perroud P.-F."/>
            <person name="Lindquist E.A."/>
            <person name="Kamisugi Y."/>
            <person name="Tanahashi T."/>
            <person name="Sakakibara K."/>
            <person name="Fujita T."/>
            <person name="Oishi K."/>
            <person name="Shin-I T."/>
            <person name="Kuroki Y."/>
            <person name="Toyoda A."/>
            <person name="Suzuki Y."/>
            <person name="Hashimoto S.-I."/>
            <person name="Yamaguchi K."/>
            <person name="Sugano S."/>
            <person name="Kohara Y."/>
            <person name="Fujiyama A."/>
            <person name="Anterola A."/>
            <person name="Aoki S."/>
            <person name="Ashton N."/>
            <person name="Barbazuk W.B."/>
            <person name="Barker E."/>
            <person name="Bennetzen J.L."/>
            <person name="Blankenship R."/>
            <person name="Cho S.H."/>
            <person name="Dutcher S.K."/>
            <person name="Estelle M."/>
            <person name="Fawcett J.A."/>
            <person name="Gundlach H."/>
            <person name="Hanada K."/>
            <person name="Heyl A."/>
            <person name="Hicks K.A."/>
            <person name="Hughes J."/>
            <person name="Lohr M."/>
            <person name="Mayer K."/>
            <person name="Melkozernov A."/>
            <person name="Murata T."/>
            <person name="Nelson D.R."/>
            <person name="Pils B."/>
            <person name="Prigge M."/>
            <person name="Reiss B."/>
            <person name="Renner T."/>
            <person name="Rombauts S."/>
            <person name="Rushton P.J."/>
            <person name="Sanderfoot A."/>
            <person name="Schween G."/>
            <person name="Shiu S.-H."/>
            <person name="Stueber K."/>
            <person name="Theodoulou F.L."/>
            <person name="Tu H."/>
            <person name="Van de Peer Y."/>
            <person name="Verrier P.J."/>
            <person name="Waters E."/>
            <person name="Wood A."/>
            <person name="Yang L."/>
            <person name="Cove D."/>
            <person name="Cuming A.C."/>
            <person name="Hasebe M."/>
            <person name="Lucas S."/>
            <person name="Mishler B.D."/>
            <person name="Reski R."/>
            <person name="Grigoriev I.V."/>
            <person name="Quatrano R.S."/>
            <person name="Boore J.L."/>
        </authorList>
    </citation>
    <scope>NUCLEOTIDE SEQUENCE [LARGE SCALE GENOMIC DNA]</scope>
    <source>
        <strain>cv. Gransden 2004</strain>
    </source>
</reference>
<evidence type="ECO:0000255" key="1">
    <source>
        <dbReference type="HAMAP-Rule" id="MF_03157"/>
    </source>
</evidence>
<dbReference type="EC" id="4.2.1.93" evidence="1"/>
<dbReference type="EMBL" id="DS544924">
    <property type="protein sequence ID" value="EDQ76047.1"/>
    <property type="molecule type" value="Genomic_DNA"/>
</dbReference>
<dbReference type="RefSeq" id="XP_001758978.1">
    <property type="nucleotide sequence ID" value="XM_001758926.1"/>
</dbReference>
<dbReference type="SMR" id="A9RY03"/>
<dbReference type="FunCoup" id="A9RY03">
    <property type="interactions" value="1991"/>
</dbReference>
<dbReference type="PaxDb" id="3218-PP1S35_49V6.1"/>
<dbReference type="eggNOG" id="KOG3974">
    <property type="taxonomic scope" value="Eukaryota"/>
</dbReference>
<dbReference type="HOGENOM" id="CLU_030651_1_0_1"/>
<dbReference type="InParanoid" id="A9RY03"/>
<dbReference type="Proteomes" id="UP000006727">
    <property type="component" value="Unplaced"/>
</dbReference>
<dbReference type="GO" id="GO:0005524">
    <property type="term" value="F:ATP binding"/>
    <property type="evidence" value="ECO:0007669"/>
    <property type="project" value="UniProtKB-KW"/>
</dbReference>
<dbReference type="GO" id="GO:0047453">
    <property type="term" value="F:ATP-dependent NAD(P)H-hydrate dehydratase activity"/>
    <property type="evidence" value="ECO:0000318"/>
    <property type="project" value="GO_Central"/>
</dbReference>
<dbReference type="GO" id="GO:0110051">
    <property type="term" value="P:metabolite repair"/>
    <property type="evidence" value="ECO:0000318"/>
    <property type="project" value="GO_Central"/>
</dbReference>
<dbReference type="GO" id="GO:0046496">
    <property type="term" value="P:nicotinamide nucleotide metabolic process"/>
    <property type="evidence" value="ECO:0007669"/>
    <property type="project" value="UniProtKB-UniRule"/>
</dbReference>
<dbReference type="CDD" id="cd01171">
    <property type="entry name" value="YXKO-related"/>
    <property type="match status" value="1"/>
</dbReference>
<dbReference type="FunFam" id="3.40.1190.20:FF:000028">
    <property type="entry name" value="ATP-dependent (S)-NAD(P)H-hydrate dehydratase"/>
    <property type="match status" value="1"/>
</dbReference>
<dbReference type="Gene3D" id="3.40.1190.20">
    <property type="match status" value="1"/>
</dbReference>
<dbReference type="HAMAP" id="MF_01965">
    <property type="entry name" value="NADHX_dehydratase"/>
    <property type="match status" value="1"/>
</dbReference>
<dbReference type="InterPro" id="IPR000631">
    <property type="entry name" value="CARKD"/>
</dbReference>
<dbReference type="InterPro" id="IPR029056">
    <property type="entry name" value="Ribokinase-like"/>
</dbReference>
<dbReference type="NCBIfam" id="TIGR00196">
    <property type="entry name" value="yjeF_cterm"/>
    <property type="match status" value="1"/>
</dbReference>
<dbReference type="PANTHER" id="PTHR12592:SF0">
    <property type="entry name" value="ATP-DEPENDENT (S)-NAD(P)H-HYDRATE DEHYDRATASE"/>
    <property type="match status" value="1"/>
</dbReference>
<dbReference type="PANTHER" id="PTHR12592">
    <property type="entry name" value="ATP-DEPENDENT (S)-NAD(P)H-HYDRATE DEHYDRATASE FAMILY MEMBER"/>
    <property type="match status" value="1"/>
</dbReference>
<dbReference type="Pfam" id="PF01256">
    <property type="entry name" value="Carb_kinase"/>
    <property type="match status" value="1"/>
</dbReference>
<dbReference type="SUPFAM" id="SSF53613">
    <property type="entry name" value="Ribokinase-like"/>
    <property type="match status" value="1"/>
</dbReference>
<dbReference type="PROSITE" id="PS51383">
    <property type="entry name" value="YJEF_C_3"/>
    <property type="match status" value="1"/>
</dbReference>